<comment type="function">
    <text evidence="1">Required for maturation of 30S ribosomal subunits.</text>
</comment>
<comment type="subcellular location">
    <subcellularLocation>
        <location evidence="1">Cytoplasm</location>
    </subcellularLocation>
</comment>
<comment type="similarity">
    <text evidence="1">Belongs to the RimP family.</text>
</comment>
<name>RIMP_STAS1</name>
<reference key="1">
    <citation type="journal article" date="2005" name="Proc. Natl. Acad. Sci. U.S.A.">
        <title>Whole genome sequence of Staphylococcus saprophyticus reveals the pathogenesis of uncomplicated urinary tract infection.</title>
        <authorList>
            <person name="Kuroda M."/>
            <person name="Yamashita A."/>
            <person name="Hirakawa H."/>
            <person name="Kumano M."/>
            <person name="Morikawa K."/>
            <person name="Higashide M."/>
            <person name="Maruyama A."/>
            <person name="Inose Y."/>
            <person name="Matoba K."/>
            <person name="Toh H."/>
            <person name="Kuhara S."/>
            <person name="Hattori M."/>
            <person name="Ohta T."/>
        </authorList>
    </citation>
    <scope>NUCLEOTIDE SEQUENCE [LARGE SCALE GENOMIC DNA]</scope>
    <source>
        <strain>ATCC 15305 / DSM 20229 / NCIMB 8711 / NCTC 7292 / S-41</strain>
    </source>
</reference>
<sequence>MSKITEQVETIIQPVLNDLNFELVEVEFTKEGKDHFLRVSIDKEGGVDLNDCALASEKISEVMDAEDPIQEMYYLDVASPGAERPIKKEKDFQNAITKPVFVSLYAPIEGSKEWLGILQSVDETNIVMEVKEKAKTKQIEIPRNKIAKARHAVMI</sequence>
<organism>
    <name type="scientific">Staphylococcus saprophyticus subsp. saprophyticus (strain ATCC 15305 / DSM 20229 / NCIMB 8711 / NCTC 7292 / S-41)</name>
    <dbReference type="NCBI Taxonomy" id="342451"/>
    <lineage>
        <taxon>Bacteria</taxon>
        <taxon>Bacillati</taxon>
        <taxon>Bacillota</taxon>
        <taxon>Bacilli</taxon>
        <taxon>Bacillales</taxon>
        <taxon>Staphylococcaceae</taxon>
        <taxon>Staphylococcus</taxon>
    </lineage>
</organism>
<feature type="chain" id="PRO_0000181928" description="Ribosome maturation factor RimP">
    <location>
        <begin position="1"/>
        <end position="155"/>
    </location>
</feature>
<evidence type="ECO:0000255" key="1">
    <source>
        <dbReference type="HAMAP-Rule" id="MF_01077"/>
    </source>
</evidence>
<keyword id="KW-0963">Cytoplasm</keyword>
<keyword id="KW-1185">Reference proteome</keyword>
<keyword id="KW-0690">Ribosome biogenesis</keyword>
<proteinExistence type="inferred from homology"/>
<accession>Q49X50</accession>
<dbReference type="EMBL" id="AP008934">
    <property type="protein sequence ID" value="BAE18648.1"/>
    <property type="molecule type" value="Genomic_DNA"/>
</dbReference>
<dbReference type="RefSeq" id="WP_002483458.1">
    <property type="nucleotide sequence ID" value="NZ_MTGA01000034.1"/>
</dbReference>
<dbReference type="SMR" id="Q49X50"/>
<dbReference type="GeneID" id="66867715"/>
<dbReference type="KEGG" id="ssp:SSP1503"/>
<dbReference type="eggNOG" id="COG0779">
    <property type="taxonomic scope" value="Bacteria"/>
</dbReference>
<dbReference type="HOGENOM" id="CLU_070525_2_0_9"/>
<dbReference type="OrthoDB" id="9805006at2"/>
<dbReference type="Proteomes" id="UP000006371">
    <property type="component" value="Chromosome"/>
</dbReference>
<dbReference type="GO" id="GO:0005829">
    <property type="term" value="C:cytosol"/>
    <property type="evidence" value="ECO:0007669"/>
    <property type="project" value="TreeGrafter"/>
</dbReference>
<dbReference type="GO" id="GO:0000028">
    <property type="term" value="P:ribosomal small subunit assembly"/>
    <property type="evidence" value="ECO:0007669"/>
    <property type="project" value="TreeGrafter"/>
</dbReference>
<dbReference type="GO" id="GO:0006412">
    <property type="term" value="P:translation"/>
    <property type="evidence" value="ECO:0007669"/>
    <property type="project" value="TreeGrafter"/>
</dbReference>
<dbReference type="CDD" id="cd01734">
    <property type="entry name" value="YlxS_C"/>
    <property type="match status" value="1"/>
</dbReference>
<dbReference type="FunFam" id="3.30.300.70:FF:000001">
    <property type="entry name" value="Ribosome maturation factor RimP"/>
    <property type="match status" value="1"/>
</dbReference>
<dbReference type="Gene3D" id="2.30.30.180">
    <property type="entry name" value="Ribosome maturation factor RimP, C-terminal domain"/>
    <property type="match status" value="1"/>
</dbReference>
<dbReference type="Gene3D" id="3.30.300.70">
    <property type="entry name" value="RimP-like superfamily, N-terminal"/>
    <property type="match status" value="1"/>
</dbReference>
<dbReference type="HAMAP" id="MF_01077">
    <property type="entry name" value="RimP"/>
    <property type="match status" value="1"/>
</dbReference>
<dbReference type="InterPro" id="IPR003728">
    <property type="entry name" value="Ribosome_maturation_RimP"/>
</dbReference>
<dbReference type="InterPro" id="IPR028998">
    <property type="entry name" value="RimP_C"/>
</dbReference>
<dbReference type="InterPro" id="IPR036847">
    <property type="entry name" value="RimP_C_sf"/>
</dbReference>
<dbReference type="InterPro" id="IPR028989">
    <property type="entry name" value="RimP_N"/>
</dbReference>
<dbReference type="InterPro" id="IPR035956">
    <property type="entry name" value="RimP_N_sf"/>
</dbReference>
<dbReference type="NCBIfam" id="NF000928">
    <property type="entry name" value="PRK00092.1-2"/>
    <property type="match status" value="1"/>
</dbReference>
<dbReference type="PANTHER" id="PTHR33867">
    <property type="entry name" value="RIBOSOME MATURATION FACTOR RIMP"/>
    <property type="match status" value="1"/>
</dbReference>
<dbReference type="PANTHER" id="PTHR33867:SF1">
    <property type="entry name" value="RIBOSOME MATURATION FACTOR RIMP"/>
    <property type="match status" value="1"/>
</dbReference>
<dbReference type="Pfam" id="PF17384">
    <property type="entry name" value="DUF150_C"/>
    <property type="match status" value="1"/>
</dbReference>
<dbReference type="Pfam" id="PF02576">
    <property type="entry name" value="RimP_N"/>
    <property type="match status" value="1"/>
</dbReference>
<dbReference type="SUPFAM" id="SSF74942">
    <property type="entry name" value="YhbC-like, C-terminal domain"/>
    <property type="match status" value="1"/>
</dbReference>
<dbReference type="SUPFAM" id="SSF75420">
    <property type="entry name" value="YhbC-like, N-terminal domain"/>
    <property type="match status" value="1"/>
</dbReference>
<protein>
    <recommendedName>
        <fullName evidence="1">Ribosome maturation factor RimP</fullName>
    </recommendedName>
</protein>
<gene>
    <name evidence="1" type="primary">rimP</name>
    <name type="ordered locus">SSP1503</name>
</gene>